<evidence type="ECO:0000255" key="1">
    <source>
        <dbReference type="PROSITE-ProRule" id="PRU00096"/>
    </source>
</evidence>
<evidence type="ECO:0000255" key="2">
    <source>
        <dbReference type="PROSITE-ProRule" id="PRU00145"/>
    </source>
</evidence>
<evidence type="ECO:0000256" key="3">
    <source>
        <dbReference type="SAM" id="MobiDB-lite"/>
    </source>
</evidence>
<evidence type="ECO:0000269" key="4">
    <source>
    </source>
</evidence>
<evidence type="ECO:0000269" key="5">
    <source>
    </source>
</evidence>
<evidence type="ECO:0000305" key="6"/>
<evidence type="ECO:0000312" key="7">
    <source>
        <dbReference type="PomBase" id="SPAC23H4.01c"/>
    </source>
</evidence>
<comment type="subcellular location">
    <subcellularLocation>
        <location evidence="4">Cytoplasm</location>
    </subcellularLocation>
</comment>
<comment type="similarity">
    <text evidence="6">Belongs to the OSBP family.</text>
</comment>
<feature type="chain" id="PRO_0000100392" description="Oxysterol-binding protein homolog C23H4.01c">
    <location>
        <begin position="1"/>
        <end position="945"/>
    </location>
</feature>
<feature type="domain" description="GOLD" evidence="1">
    <location>
        <begin position="1"/>
        <end position="131"/>
    </location>
</feature>
<feature type="domain" description="PH" evidence="2">
    <location>
        <begin position="149"/>
        <end position="243"/>
    </location>
</feature>
<feature type="region of interest" description="Disordered" evidence="3">
    <location>
        <begin position="396"/>
        <end position="555"/>
    </location>
</feature>
<feature type="region of interest" description="Disordered" evidence="3">
    <location>
        <begin position="846"/>
        <end position="894"/>
    </location>
</feature>
<feature type="compositionally biased region" description="Low complexity" evidence="3">
    <location>
        <begin position="443"/>
        <end position="454"/>
    </location>
</feature>
<feature type="compositionally biased region" description="Polar residues" evidence="3">
    <location>
        <begin position="460"/>
        <end position="470"/>
    </location>
</feature>
<feature type="compositionally biased region" description="Basic and acidic residues" evidence="3">
    <location>
        <begin position="482"/>
        <end position="499"/>
    </location>
</feature>
<feature type="modified residue" description="Phosphoserine" evidence="5">
    <location>
        <position position="288"/>
    </location>
</feature>
<feature type="modified residue" description="Phosphoserine" evidence="5">
    <location>
        <position position="419"/>
    </location>
</feature>
<feature type="modified residue" description="Phosphoserine" evidence="5">
    <location>
        <position position="421"/>
    </location>
</feature>
<feature type="modified residue" description="Phosphoserine" evidence="5">
    <location>
        <position position="503"/>
    </location>
</feature>
<gene>
    <name evidence="7" type="primary">osh3</name>
    <name evidence="7" type="ORF">SPAC23H4.01c</name>
    <name evidence="7" type="ORF">SPAP27G11.01</name>
</gene>
<keyword id="KW-0963">Cytoplasm</keyword>
<keyword id="KW-0445">Lipid transport</keyword>
<keyword id="KW-0446">Lipid-binding</keyword>
<keyword id="KW-0597">Phosphoprotein</keyword>
<keyword id="KW-1185">Reference proteome</keyword>
<keyword id="KW-0813">Transport</keyword>
<organism>
    <name type="scientific">Schizosaccharomyces pombe (strain 972 / ATCC 24843)</name>
    <name type="common">Fission yeast</name>
    <dbReference type="NCBI Taxonomy" id="284812"/>
    <lineage>
        <taxon>Eukaryota</taxon>
        <taxon>Fungi</taxon>
        <taxon>Dikarya</taxon>
        <taxon>Ascomycota</taxon>
        <taxon>Taphrinomycotina</taxon>
        <taxon>Schizosaccharomycetes</taxon>
        <taxon>Schizosaccharomycetales</taxon>
        <taxon>Schizosaccharomycetaceae</taxon>
        <taxon>Schizosaccharomyces</taxon>
    </lineage>
</organism>
<protein>
    <recommendedName>
        <fullName>Oxysterol-binding protein homolog C23H4.01c</fullName>
    </recommendedName>
</protein>
<dbReference type="EMBL" id="CU329670">
    <property type="protein sequence ID" value="CAB11656.2"/>
    <property type="molecule type" value="Genomic_DNA"/>
</dbReference>
<dbReference type="EMBL" id="AB028015">
    <property type="protein sequence ID" value="BAA87319.1"/>
    <property type="molecule type" value="Genomic_DNA"/>
</dbReference>
<dbReference type="RefSeq" id="NP_593405.2">
    <property type="nucleotide sequence ID" value="NM_001018838.2"/>
</dbReference>
<dbReference type="SMR" id="O13944"/>
<dbReference type="BioGRID" id="278287">
    <property type="interactions" value="1"/>
</dbReference>
<dbReference type="FunCoup" id="O13944">
    <property type="interactions" value="157"/>
</dbReference>
<dbReference type="STRING" id="284812.O13944"/>
<dbReference type="iPTMnet" id="O13944"/>
<dbReference type="PaxDb" id="4896-SPAC23H4.01c.1"/>
<dbReference type="EnsemblFungi" id="SPAC23H4.01c.1">
    <property type="protein sequence ID" value="SPAC23H4.01c.1:pep"/>
    <property type="gene ID" value="SPAC23H4.01c"/>
</dbReference>
<dbReference type="GeneID" id="2541796"/>
<dbReference type="KEGG" id="spo:2541796"/>
<dbReference type="PomBase" id="SPAC23H4.01c">
    <property type="gene designation" value="osh3"/>
</dbReference>
<dbReference type="VEuPathDB" id="FungiDB:SPAC23H4.01c"/>
<dbReference type="eggNOG" id="KOG1737">
    <property type="taxonomic scope" value="Eukaryota"/>
</dbReference>
<dbReference type="HOGENOM" id="CLU_007105_4_0_1"/>
<dbReference type="InParanoid" id="O13944"/>
<dbReference type="OMA" id="SYFVRWV"/>
<dbReference type="PhylomeDB" id="O13944"/>
<dbReference type="Reactome" id="R-SPO-192105">
    <property type="pathway name" value="Synthesis of bile acids and bile salts"/>
</dbReference>
<dbReference type="PRO" id="PR:O13944"/>
<dbReference type="Proteomes" id="UP000002485">
    <property type="component" value="Chromosome I"/>
</dbReference>
<dbReference type="GO" id="GO:0032541">
    <property type="term" value="C:cortical endoplasmic reticulum"/>
    <property type="evidence" value="ECO:0000318"/>
    <property type="project" value="GO_Central"/>
</dbReference>
<dbReference type="GO" id="GO:0005829">
    <property type="term" value="C:cytosol"/>
    <property type="evidence" value="ECO:0007005"/>
    <property type="project" value="PomBase"/>
</dbReference>
<dbReference type="GO" id="GO:0097038">
    <property type="term" value="C:perinuclear endoplasmic reticulum"/>
    <property type="evidence" value="ECO:0000318"/>
    <property type="project" value="GO_Central"/>
</dbReference>
<dbReference type="GO" id="GO:0005886">
    <property type="term" value="C:plasma membrane"/>
    <property type="evidence" value="ECO:0000318"/>
    <property type="project" value="GO_Central"/>
</dbReference>
<dbReference type="GO" id="GO:0008142">
    <property type="term" value="F:oxysterol binding"/>
    <property type="evidence" value="ECO:0000266"/>
    <property type="project" value="PomBase"/>
</dbReference>
<dbReference type="GO" id="GO:0032934">
    <property type="term" value="F:sterol binding"/>
    <property type="evidence" value="ECO:0000318"/>
    <property type="project" value="GO_Central"/>
</dbReference>
<dbReference type="GO" id="GO:0120015">
    <property type="term" value="F:sterol transfer activity"/>
    <property type="evidence" value="ECO:0000266"/>
    <property type="project" value="PomBase"/>
</dbReference>
<dbReference type="GO" id="GO:0006897">
    <property type="term" value="P:endocytosis"/>
    <property type="evidence" value="ECO:0000318"/>
    <property type="project" value="GO_Central"/>
</dbReference>
<dbReference type="GO" id="GO:0035621">
    <property type="term" value="P:ER to Golgi ceramide transport"/>
    <property type="evidence" value="ECO:0000318"/>
    <property type="project" value="GO_Central"/>
</dbReference>
<dbReference type="GO" id="GO:0006887">
    <property type="term" value="P:exocytosis"/>
    <property type="evidence" value="ECO:0000318"/>
    <property type="project" value="GO_Central"/>
</dbReference>
<dbReference type="GO" id="GO:0120009">
    <property type="term" value="P:intermembrane lipid transfer"/>
    <property type="evidence" value="ECO:0000305"/>
    <property type="project" value="PomBase"/>
</dbReference>
<dbReference type="GO" id="GO:0030011">
    <property type="term" value="P:maintenance of cell polarity"/>
    <property type="evidence" value="ECO:0000318"/>
    <property type="project" value="GO_Central"/>
</dbReference>
<dbReference type="GO" id="GO:0034727">
    <property type="term" value="P:piecemeal microautophagy of the nucleus"/>
    <property type="evidence" value="ECO:0000318"/>
    <property type="project" value="GO_Central"/>
</dbReference>
<dbReference type="GO" id="GO:0015918">
    <property type="term" value="P:sterol transport"/>
    <property type="evidence" value="ECO:0000266"/>
    <property type="project" value="PomBase"/>
</dbReference>
<dbReference type="CDD" id="cd13289">
    <property type="entry name" value="PH_Osh3p_yeast"/>
    <property type="match status" value="1"/>
</dbReference>
<dbReference type="FunFam" id="2.30.29.30:FF:000369">
    <property type="entry name" value="Oxysterol binding protein"/>
    <property type="match status" value="1"/>
</dbReference>
<dbReference type="FunFam" id="2.40.160.120:FF:000013">
    <property type="entry name" value="Oxysterol binding protein"/>
    <property type="match status" value="1"/>
</dbReference>
<dbReference type="Gene3D" id="2.40.160.120">
    <property type="match status" value="1"/>
</dbReference>
<dbReference type="Gene3D" id="3.30.70.3490">
    <property type="match status" value="1"/>
</dbReference>
<dbReference type="Gene3D" id="2.60.120.680">
    <property type="entry name" value="GOLD domain"/>
    <property type="match status" value="1"/>
</dbReference>
<dbReference type="Gene3D" id="2.30.29.30">
    <property type="entry name" value="Pleckstrin-homology domain (PH domain)/Phosphotyrosine-binding domain (PTB)"/>
    <property type="match status" value="1"/>
</dbReference>
<dbReference type="InterPro" id="IPR009038">
    <property type="entry name" value="GOLD_dom"/>
</dbReference>
<dbReference type="InterPro" id="IPR036598">
    <property type="entry name" value="GOLD_dom_sf"/>
</dbReference>
<dbReference type="InterPro" id="IPR037239">
    <property type="entry name" value="OSBP_sf"/>
</dbReference>
<dbReference type="InterPro" id="IPR000648">
    <property type="entry name" value="Oxysterol-bd"/>
</dbReference>
<dbReference type="InterPro" id="IPR018494">
    <property type="entry name" value="Oxysterol-bd_CS"/>
</dbReference>
<dbReference type="InterPro" id="IPR011993">
    <property type="entry name" value="PH-like_dom_sf"/>
</dbReference>
<dbReference type="InterPro" id="IPR041680">
    <property type="entry name" value="PH_8"/>
</dbReference>
<dbReference type="InterPro" id="IPR001849">
    <property type="entry name" value="PH_domain"/>
</dbReference>
<dbReference type="PANTHER" id="PTHR10972:SF203">
    <property type="entry name" value="OXYSTEROL-BINDING PROTEIN HOMOLOG 3"/>
    <property type="match status" value="1"/>
</dbReference>
<dbReference type="PANTHER" id="PTHR10972">
    <property type="entry name" value="OXYSTEROL-BINDING PROTEIN-RELATED"/>
    <property type="match status" value="1"/>
</dbReference>
<dbReference type="Pfam" id="PF01237">
    <property type="entry name" value="Oxysterol_BP"/>
    <property type="match status" value="1"/>
</dbReference>
<dbReference type="Pfam" id="PF15409">
    <property type="entry name" value="PH_8"/>
    <property type="match status" value="1"/>
</dbReference>
<dbReference type="SMART" id="SM00233">
    <property type="entry name" value="PH"/>
    <property type="match status" value="1"/>
</dbReference>
<dbReference type="SUPFAM" id="SSF144000">
    <property type="entry name" value="Oxysterol-binding protein-like"/>
    <property type="match status" value="1"/>
</dbReference>
<dbReference type="SUPFAM" id="SSF50729">
    <property type="entry name" value="PH domain-like"/>
    <property type="match status" value="1"/>
</dbReference>
<dbReference type="SUPFAM" id="SSF101576">
    <property type="entry name" value="Supernatant protein factor (SPF), C-terminal domain"/>
    <property type="match status" value="1"/>
</dbReference>
<dbReference type="PROSITE" id="PS50866">
    <property type="entry name" value="GOLD"/>
    <property type="match status" value="1"/>
</dbReference>
<dbReference type="PROSITE" id="PS01013">
    <property type="entry name" value="OSBP"/>
    <property type="match status" value="1"/>
</dbReference>
<dbReference type="PROSITE" id="PS50003">
    <property type="entry name" value="PH_DOMAIN"/>
    <property type="match status" value="1"/>
</dbReference>
<reference key="1">
    <citation type="journal article" date="2002" name="Nature">
        <title>The genome sequence of Schizosaccharomyces pombe.</title>
        <authorList>
            <person name="Wood V."/>
            <person name="Gwilliam R."/>
            <person name="Rajandream M.A."/>
            <person name="Lyne M.H."/>
            <person name="Lyne R."/>
            <person name="Stewart A."/>
            <person name="Sgouros J.G."/>
            <person name="Peat N."/>
            <person name="Hayles J."/>
            <person name="Baker S.G."/>
            <person name="Basham D."/>
            <person name="Bowman S."/>
            <person name="Brooks K."/>
            <person name="Brown D."/>
            <person name="Brown S."/>
            <person name="Chillingworth T."/>
            <person name="Churcher C.M."/>
            <person name="Collins M."/>
            <person name="Connor R."/>
            <person name="Cronin A."/>
            <person name="Davis P."/>
            <person name="Feltwell T."/>
            <person name="Fraser A."/>
            <person name="Gentles S."/>
            <person name="Goble A."/>
            <person name="Hamlin N."/>
            <person name="Harris D.E."/>
            <person name="Hidalgo J."/>
            <person name="Hodgson G."/>
            <person name="Holroyd S."/>
            <person name="Hornsby T."/>
            <person name="Howarth S."/>
            <person name="Huckle E.J."/>
            <person name="Hunt S."/>
            <person name="Jagels K."/>
            <person name="James K.D."/>
            <person name="Jones L."/>
            <person name="Jones M."/>
            <person name="Leather S."/>
            <person name="McDonald S."/>
            <person name="McLean J."/>
            <person name="Mooney P."/>
            <person name="Moule S."/>
            <person name="Mungall K.L."/>
            <person name="Murphy L.D."/>
            <person name="Niblett D."/>
            <person name="Odell C."/>
            <person name="Oliver K."/>
            <person name="O'Neil S."/>
            <person name="Pearson D."/>
            <person name="Quail M.A."/>
            <person name="Rabbinowitsch E."/>
            <person name="Rutherford K.M."/>
            <person name="Rutter S."/>
            <person name="Saunders D."/>
            <person name="Seeger K."/>
            <person name="Sharp S."/>
            <person name="Skelton J."/>
            <person name="Simmonds M.N."/>
            <person name="Squares R."/>
            <person name="Squares S."/>
            <person name="Stevens K."/>
            <person name="Taylor K."/>
            <person name="Taylor R.G."/>
            <person name="Tivey A."/>
            <person name="Walsh S.V."/>
            <person name="Warren T."/>
            <person name="Whitehead S."/>
            <person name="Woodward J.R."/>
            <person name="Volckaert G."/>
            <person name="Aert R."/>
            <person name="Robben J."/>
            <person name="Grymonprez B."/>
            <person name="Weltjens I."/>
            <person name="Vanstreels E."/>
            <person name="Rieger M."/>
            <person name="Schaefer M."/>
            <person name="Mueller-Auer S."/>
            <person name="Gabel C."/>
            <person name="Fuchs M."/>
            <person name="Duesterhoeft A."/>
            <person name="Fritzc C."/>
            <person name="Holzer E."/>
            <person name="Moestl D."/>
            <person name="Hilbert H."/>
            <person name="Borzym K."/>
            <person name="Langer I."/>
            <person name="Beck A."/>
            <person name="Lehrach H."/>
            <person name="Reinhardt R."/>
            <person name="Pohl T.M."/>
            <person name="Eger P."/>
            <person name="Zimmermann W."/>
            <person name="Wedler H."/>
            <person name="Wambutt R."/>
            <person name="Purnelle B."/>
            <person name="Goffeau A."/>
            <person name="Cadieu E."/>
            <person name="Dreano S."/>
            <person name="Gloux S."/>
            <person name="Lelaure V."/>
            <person name="Mottier S."/>
            <person name="Galibert F."/>
            <person name="Aves S.J."/>
            <person name="Xiang Z."/>
            <person name="Hunt C."/>
            <person name="Moore K."/>
            <person name="Hurst S.M."/>
            <person name="Lucas M."/>
            <person name="Rochet M."/>
            <person name="Gaillardin C."/>
            <person name="Tallada V.A."/>
            <person name="Garzon A."/>
            <person name="Thode G."/>
            <person name="Daga R.R."/>
            <person name="Cruzado L."/>
            <person name="Jimenez J."/>
            <person name="Sanchez M."/>
            <person name="del Rey F."/>
            <person name="Benito J."/>
            <person name="Dominguez A."/>
            <person name="Revuelta J.L."/>
            <person name="Moreno S."/>
            <person name="Armstrong J."/>
            <person name="Forsburg S.L."/>
            <person name="Cerutti L."/>
            <person name="Lowe T."/>
            <person name="McCombie W.R."/>
            <person name="Paulsen I."/>
            <person name="Potashkin J."/>
            <person name="Shpakovski G.V."/>
            <person name="Ussery D."/>
            <person name="Barrell B.G."/>
            <person name="Nurse P."/>
        </authorList>
    </citation>
    <scope>NUCLEOTIDE SEQUENCE [LARGE SCALE GENOMIC DNA]</scope>
    <source>
        <strain>972 / ATCC 24843</strain>
    </source>
</reference>
<reference key="2">
    <citation type="journal article" date="2000" name="Genes Cells">
        <title>Large-scale screening of intracellular protein localization in living fission yeast cells by the use of a GFP-fusion genomic DNA library.</title>
        <authorList>
            <person name="Ding D.-Q."/>
            <person name="Tomita Y."/>
            <person name="Yamamoto A."/>
            <person name="Chikashige Y."/>
            <person name="Haraguchi T."/>
            <person name="Hiraoka Y."/>
        </authorList>
    </citation>
    <scope>NUCLEOTIDE SEQUENCE [LARGE SCALE GENOMIC DNA] OF 391-607</scope>
    <scope>SUBCELLULAR LOCATION</scope>
    <source>
        <strain>ATCC 38364 / 968</strain>
    </source>
</reference>
<reference key="3">
    <citation type="journal article" date="2008" name="J. Proteome Res.">
        <title>Phosphoproteome analysis of fission yeast.</title>
        <authorList>
            <person name="Wilson-Grady J.T."/>
            <person name="Villen J."/>
            <person name="Gygi S.P."/>
        </authorList>
    </citation>
    <scope>PHOSPHORYLATION [LARGE SCALE ANALYSIS] AT SER-288; SER-419; SER-421 AND SER-503</scope>
    <scope>IDENTIFICATION BY MASS SPECTROMETRY</scope>
</reference>
<proteinExistence type="evidence at protein level"/>
<name>OSH3_SCHPO</name>
<sequence>METVEIRSKSLLIQWLTVESNSLLSWQLHVKRKSIKFDIYHKKNDTSSLLDGSNKNTDRSILHTKRQHTHEAGIKKLSAAGLELFYQGERCMSEKPSEGSVYIENGGLYAFVFDNTFSKTKPKTVTFLLTAQPYNGPRIPNASVHGSPKQIISGTLLKKRRKKGQGYARRYFTLNMVEGTISYYANENSSVMRGKIPLSIAVISVAAETHEINVDSGVELWNLRAHTHQDWLRWCNALEKAKNSQTSSKLVVDERTQESSSNQLVSIYSRLRECLDIAQLYRTSRIKSASSHNFSVPEIRIQLPGDAKENKETRTSVEITAAENAQAAVTLRKVTRQLGSLLHELECFIQHHEYTKERTAQSSPSSRMSMDSNFEQHWYDAEDYESTTSQLNHYSESGAHAADATKSSVAHNEKVEDISDSDIPIMKTSSNSTSLDADRDSDTSSISDTSSNSSAPHEQLNATSLASTVDESSRSPPLPEVESNKENDIKRKQPFHDLMDSSSPDDSSFANAKSDEEVQKPSVSKNIADGAVISIPKPLTPKPSDSNSLYPLPHSKVGRRKNIPAITVPPPSILSILRKNIGKDISSIPAPVVSNEPCNLLQRCAEDLEYSNMLDKANECDDDIKIFYVAAFAVSNFSNMRHKERSVRKVFSPLLGETFELVREDRNYRFLAEKVCHRPLIIACHAESRNWIWNHSPKPIQKFWGKSVELNTLGPVTIKLACGTEFSFMKPACFLKNVAIGEKYVEPYDHMEIVDETTGDKAVIRFKSGGMFSGRSEDVLVTVIRSNGEEDPKCLQGKWTSHLDFVNTDEGNVIERIWEVGPLVDKPEDHCGMTVFAAQMNEITDLEKDKLPPTDTRLRPDQRYRENNDLDHAEPLKLELEQKQRERRKEMEEKDIKWEPRWFVPSVAGDDEDEDGSGPIWQLKKENNYWESRENSTWSSCPKLW</sequence>
<accession>O13944</accession>
<accession>Q9P7N7</accession>
<accession>Q9US66</accession>